<keyword id="KW-0215">Deoxyribonucleotide synthesis</keyword>
<keyword id="KW-0235">DNA replication</keyword>
<keyword id="KW-0244">Early protein</keyword>
<keyword id="KW-0408">Iron</keyword>
<keyword id="KW-0479">Metal-binding</keyword>
<keyword id="KW-0560">Oxidoreductase</keyword>
<keyword id="KW-1185">Reference proteome</keyword>
<keyword id="KW-1194">Viral DNA replication</keyword>
<name>RIR2_ASFB7</name>
<organismHost>
    <name type="scientific">Ornithodoros</name>
    <name type="common">relapsing fever ticks</name>
    <dbReference type="NCBI Taxonomy" id="6937"/>
</organismHost>
<organismHost>
    <name type="scientific">Sus scrofa</name>
    <name type="common">Pig</name>
    <dbReference type="NCBI Taxonomy" id="9823"/>
</organismHost>
<feature type="chain" id="PRO_0000190491" description="Ribonucleoside-diphosphate reductase small chain">
    <location>
        <begin position="1"/>
        <end position="334"/>
    </location>
</feature>
<feature type="active site" evidence="2">
    <location>
        <position position="115"/>
    </location>
</feature>
<feature type="binding site" evidence="2">
    <location>
        <position position="77"/>
    </location>
    <ligand>
        <name>Fe cation</name>
        <dbReference type="ChEBI" id="CHEBI:24875"/>
        <label>1</label>
    </ligand>
</feature>
<feature type="binding site" evidence="2">
    <location>
        <position position="108"/>
    </location>
    <ligand>
        <name>Fe cation</name>
        <dbReference type="ChEBI" id="CHEBI:24875"/>
        <label>1</label>
    </ligand>
</feature>
<feature type="binding site" evidence="1">
    <location>
        <position position="108"/>
    </location>
    <ligand>
        <name>Fe cation</name>
        <dbReference type="ChEBI" id="CHEBI:24875"/>
        <label>2</label>
    </ligand>
</feature>
<feature type="binding site" evidence="2">
    <location>
        <position position="111"/>
    </location>
    <ligand>
        <name>Fe cation</name>
        <dbReference type="ChEBI" id="CHEBI:24875"/>
        <label>1</label>
    </ligand>
</feature>
<feature type="binding site" evidence="1">
    <location>
        <position position="171"/>
    </location>
    <ligand>
        <name>Fe cation</name>
        <dbReference type="ChEBI" id="CHEBI:24875"/>
        <label>2</label>
    </ligand>
</feature>
<feature type="binding site" evidence="1">
    <location>
        <position position="205"/>
    </location>
    <ligand>
        <name>Fe cation</name>
        <dbReference type="ChEBI" id="CHEBI:24875"/>
        <label>2</label>
    </ligand>
</feature>
<feature type="binding site" evidence="1">
    <location>
        <position position="208"/>
    </location>
    <ligand>
        <name>Fe cation</name>
        <dbReference type="ChEBI" id="CHEBI:24875"/>
        <label>2</label>
    </ligand>
</feature>
<gene>
    <name type="ordered locus">Ba71V-044</name>
    <name type="ORF">F334L</name>
</gene>
<reference key="1">
    <citation type="journal article" date="1995" name="Virology">
        <title>Analysis of the complete nucleotide sequence of African swine fever virus.</title>
        <authorList>
            <person name="Yanez R.J."/>
            <person name="Rodriguez J.M."/>
            <person name="Nogal M.L."/>
            <person name="Yuste L."/>
            <person name="Enriquez C."/>
            <person name="Rodriguez J.F."/>
            <person name="Vinuela E."/>
        </authorList>
    </citation>
    <scope>NUCLEOTIDE SEQUENCE [LARGE SCALE GENOMIC DNA]</scope>
</reference>
<reference key="2">
    <citation type="journal article" date="2020" name="J. Virol.">
        <title>The African Swine Fever Virus Transcriptome.</title>
        <authorList>
            <person name="Cackett G."/>
            <person name="Matelska D."/>
            <person name="Sykora M."/>
            <person name="Portugal R."/>
            <person name="Malecki M."/>
            <person name="Baehler J."/>
            <person name="Dixon L."/>
            <person name="Werner F."/>
        </authorList>
    </citation>
    <scope>INDUCTION</scope>
</reference>
<evidence type="ECO:0000250" key="1"/>
<evidence type="ECO:0000255" key="2">
    <source>
        <dbReference type="PROSITE-ProRule" id="PRU10014"/>
    </source>
</evidence>
<evidence type="ECO:0000269" key="3">
    <source>
    </source>
</evidence>
<evidence type="ECO:0000305" key="4"/>
<sequence length="334" mass="39806">MLIFISNMEELLIENSQRFTIFPIQHPECWNWYKKLESLTWTAQEVDMCKDIDDWEAMPKPQREFYKQILAFFVVADEIVIENLLTNFMREIKVKEVLYFYTMQAAQECVHSEAYSIQVKTLIPDEKEQQRIFSGIEKHPIIKKMAQWVRQWMDPDRNTLGERLVGFAAVEGILFQNHFVAIQFLKEQNIMPGLVSYNEFISRDEGVHCSFACFLISNYVYNIPEEKIIHKILKEAVELVDEFINYAFDKARGRVPGFSKEMLFQYIRYFTDNLCFMMQCKSIYKVGNPFPQMTKFFLNEVEKTNFFELRPTQYQNCVKDDAFAFKLFLNDDDF</sequence>
<proteinExistence type="evidence at transcript level"/>
<dbReference type="EC" id="1.17.4.1"/>
<dbReference type="EMBL" id="U18466">
    <property type="protein sequence ID" value="AAA65274.1"/>
    <property type="molecule type" value="Genomic_DNA"/>
</dbReference>
<dbReference type="RefSeq" id="NP_042738.1">
    <property type="nucleotide sequence ID" value="NC_001659.2"/>
</dbReference>
<dbReference type="SMR" id="P42492"/>
<dbReference type="GeneID" id="22220426"/>
<dbReference type="KEGG" id="vg:22220426"/>
<dbReference type="Proteomes" id="UP000000624">
    <property type="component" value="Segment"/>
</dbReference>
<dbReference type="GO" id="GO:0046872">
    <property type="term" value="F:metal ion binding"/>
    <property type="evidence" value="ECO:0007669"/>
    <property type="project" value="UniProtKB-KW"/>
</dbReference>
<dbReference type="GO" id="GO:0004748">
    <property type="term" value="F:ribonucleoside-diphosphate reductase activity, thioredoxin disulfide as acceptor"/>
    <property type="evidence" value="ECO:0007669"/>
    <property type="project" value="UniProtKB-EC"/>
</dbReference>
<dbReference type="GO" id="GO:0009263">
    <property type="term" value="P:deoxyribonucleotide biosynthetic process"/>
    <property type="evidence" value="ECO:0007669"/>
    <property type="project" value="UniProtKB-KW"/>
</dbReference>
<dbReference type="GO" id="GO:0006260">
    <property type="term" value="P:DNA replication"/>
    <property type="evidence" value="ECO:0007669"/>
    <property type="project" value="UniProtKB-KW"/>
</dbReference>
<dbReference type="GO" id="GO:0039693">
    <property type="term" value="P:viral DNA genome replication"/>
    <property type="evidence" value="ECO:0007669"/>
    <property type="project" value="UniProtKB-KW"/>
</dbReference>
<dbReference type="CDD" id="cd01049">
    <property type="entry name" value="RNRR2"/>
    <property type="match status" value="1"/>
</dbReference>
<dbReference type="Gene3D" id="1.10.620.20">
    <property type="entry name" value="Ribonucleotide Reductase, subunit A"/>
    <property type="match status" value="1"/>
</dbReference>
<dbReference type="InterPro" id="IPR009078">
    <property type="entry name" value="Ferritin-like_SF"/>
</dbReference>
<dbReference type="InterPro" id="IPR012348">
    <property type="entry name" value="RNR-like"/>
</dbReference>
<dbReference type="InterPro" id="IPR033909">
    <property type="entry name" value="RNR_small"/>
</dbReference>
<dbReference type="InterPro" id="IPR030475">
    <property type="entry name" value="RNR_small_AS"/>
</dbReference>
<dbReference type="InterPro" id="IPR000358">
    <property type="entry name" value="RNR_small_fam"/>
</dbReference>
<dbReference type="PANTHER" id="PTHR23409">
    <property type="entry name" value="RIBONUCLEOSIDE-DIPHOSPHATE REDUCTASE SMALL CHAIN"/>
    <property type="match status" value="1"/>
</dbReference>
<dbReference type="PANTHER" id="PTHR23409:SF18">
    <property type="entry name" value="RIBONUCLEOSIDE-DIPHOSPHATE REDUCTASE SUBUNIT M2"/>
    <property type="match status" value="1"/>
</dbReference>
<dbReference type="Pfam" id="PF00268">
    <property type="entry name" value="Ribonuc_red_sm"/>
    <property type="match status" value="1"/>
</dbReference>
<dbReference type="SUPFAM" id="SSF47240">
    <property type="entry name" value="Ferritin-like"/>
    <property type="match status" value="1"/>
</dbReference>
<dbReference type="PROSITE" id="PS00368">
    <property type="entry name" value="RIBORED_SMALL"/>
    <property type="match status" value="1"/>
</dbReference>
<comment type="function">
    <text evidence="1">Ribonucleoside-diphosphate reductase holoenzyme provides the precursors necessary for viral DNA synthesis. Allows virus growth in non-dividing cells. Catalyzes the biosynthesis of deoxyribonucleotides from the corresponding ribonucleotides (By similarity).</text>
</comment>
<comment type="catalytic activity">
    <reaction evidence="2">
        <text>a 2'-deoxyribonucleoside 5'-diphosphate + [thioredoxin]-disulfide + H2O = a ribonucleoside 5'-diphosphate + [thioredoxin]-dithiol</text>
        <dbReference type="Rhea" id="RHEA:23252"/>
        <dbReference type="Rhea" id="RHEA-COMP:10698"/>
        <dbReference type="Rhea" id="RHEA-COMP:10700"/>
        <dbReference type="ChEBI" id="CHEBI:15377"/>
        <dbReference type="ChEBI" id="CHEBI:29950"/>
        <dbReference type="ChEBI" id="CHEBI:50058"/>
        <dbReference type="ChEBI" id="CHEBI:57930"/>
        <dbReference type="ChEBI" id="CHEBI:73316"/>
        <dbReference type="EC" id="1.17.4.1"/>
    </reaction>
</comment>
<comment type="cofactor">
    <cofactor evidence="1">
        <name>Fe cation</name>
        <dbReference type="ChEBI" id="CHEBI:24875"/>
    </cofactor>
    <text evidence="1">Binds 2 iron ions per subunit.</text>
</comment>
<comment type="subunit">
    <text evidence="1">Heterotetramer composed of a homodimer of the large subunit (R1) and a homodimer of the small subunit (R2). Larger multisubunit protein complex are also active, composed of (R1)n(R2)n (By similarity).</text>
</comment>
<comment type="induction">
    <text evidence="3">Expressed in the early phase of the viral replicative cycle.</text>
</comment>
<comment type="similarity">
    <text evidence="4">Belongs to the ribonucleoside diphosphate reductase small chain family.</text>
</comment>
<accession>P42492</accession>
<protein>
    <recommendedName>
        <fullName>Ribonucleoside-diphosphate reductase small chain</fullName>
        <ecNumber>1.17.4.1</ecNumber>
    </recommendedName>
    <alternativeName>
        <fullName>Ribonucleotide reductase small subunit</fullName>
    </alternativeName>
</protein>
<organism>
    <name type="scientific">African swine fever virus (strain Badajoz 1971 Vero-adapted)</name>
    <name type="common">Ba71V</name>
    <name type="synonym">ASFV</name>
    <dbReference type="NCBI Taxonomy" id="10498"/>
    <lineage>
        <taxon>Viruses</taxon>
        <taxon>Varidnaviria</taxon>
        <taxon>Bamfordvirae</taxon>
        <taxon>Nucleocytoviricota</taxon>
        <taxon>Pokkesviricetes</taxon>
        <taxon>Asfuvirales</taxon>
        <taxon>Asfarviridae</taxon>
        <taxon>Asfivirus</taxon>
        <taxon>African swine fever virus</taxon>
    </lineage>
</organism>